<reference key="1">
    <citation type="journal article" date="2010" name="PLoS ONE">
        <title>The complete genome sequence of Haloferax volcanii DS2, a model archaeon.</title>
        <authorList>
            <person name="Hartman A.L."/>
            <person name="Norais C."/>
            <person name="Badger J.H."/>
            <person name="Delmas S."/>
            <person name="Haldenby S."/>
            <person name="Madupu R."/>
            <person name="Robinson J."/>
            <person name="Khouri H."/>
            <person name="Ren Q."/>
            <person name="Lowe T.M."/>
            <person name="Maupin-Furlow J."/>
            <person name="Pohlschroder M."/>
            <person name="Daniels C."/>
            <person name="Pfeiffer F."/>
            <person name="Allers T."/>
            <person name="Eisen J.A."/>
        </authorList>
    </citation>
    <scope>NUCLEOTIDE SEQUENCE [LARGE SCALE GENOMIC DNA]</scope>
    <source>
        <strain>ATCC 29605 / DSM 3757 / JCM 8879 / NBRC 14742 / NCIMB 2012 / VKM B-1768 / DS2</strain>
    </source>
</reference>
<organism>
    <name type="scientific">Haloferax volcanii (strain ATCC 29605 / DSM 3757 / JCM 8879 / NBRC 14742 / NCIMB 2012 / VKM B-1768 / DS2)</name>
    <name type="common">Halobacterium volcanii</name>
    <dbReference type="NCBI Taxonomy" id="309800"/>
    <lineage>
        <taxon>Archaea</taxon>
        <taxon>Methanobacteriati</taxon>
        <taxon>Methanobacteriota</taxon>
        <taxon>Stenosarchaea group</taxon>
        <taxon>Halobacteria</taxon>
        <taxon>Halobacteriales</taxon>
        <taxon>Haloferacaceae</taxon>
        <taxon>Haloferax</taxon>
    </lineage>
</organism>
<accession>D4GVJ2</accession>
<keyword id="KW-0067">ATP-binding</keyword>
<keyword id="KW-0274">FAD</keyword>
<keyword id="KW-0285">Flavoprotein</keyword>
<keyword id="KW-0288">FMN</keyword>
<keyword id="KW-0547">Nucleotide-binding</keyword>
<keyword id="KW-0548">Nucleotidyltransferase</keyword>
<keyword id="KW-1185">Reference proteome</keyword>
<keyword id="KW-0808">Transferase</keyword>
<feature type="chain" id="PRO_0000406238" description="FAD synthase">
    <location>
        <begin position="1"/>
        <end position="142"/>
    </location>
</feature>
<feature type="binding site" evidence="1">
    <location>
        <begin position="9"/>
        <end position="10"/>
    </location>
    <ligand>
        <name>ATP</name>
        <dbReference type="ChEBI" id="CHEBI:30616"/>
    </ligand>
</feature>
<feature type="binding site" evidence="1">
    <location>
        <begin position="14"/>
        <end position="17"/>
    </location>
    <ligand>
        <name>ATP</name>
        <dbReference type="ChEBI" id="CHEBI:30616"/>
    </ligand>
</feature>
<feature type="binding site" evidence="1">
    <location>
        <position position="92"/>
    </location>
    <ligand>
        <name>ATP</name>
        <dbReference type="ChEBI" id="CHEBI:30616"/>
    </ligand>
</feature>
<comment type="function">
    <text evidence="1">Catalyzes the transfer of the AMP portion of ATP to flavin mononucleotide (FMN) to produce flavin adenine dinucleotide (FAD) coenzyme.</text>
</comment>
<comment type="catalytic activity">
    <reaction evidence="1">
        <text>FMN + ATP + H(+) = FAD + diphosphate</text>
        <dbReference type="Rhea" id="RHEA:17237"/>
        <dbReference type="ChEBI" id="CHEBI:15378"/>
        <dbReference type="ChEBI" id="CHEBI:30616"/>
        <dbReference type="ChEBI" id="CHEBI:33019"/>
        <dbReference type="ChEBI" id="CHEBI:57692"/>
        <dbReference type="ChEBI" id="CHEBI:58210"/>
        <dbReference type="EC" id="2.7.7.2"/>
    </reaction>
</comment>
<comment type="cofactor">
    <cofactor evidence="1">
        <name>a divalent metal cation</name>
        <dbReference type="ChEBI" id="CHEBI:60240"/>
    </cofactor>
</comment>
<comment type="pathway">
    <text evidence="1">Cofactor biosynthesis; FAD biosynthesis; FAD from FMN: step 1/1.</text>
</comment>
<comment type="subunit">
    <text evidence="1">Homodimer.</text>
</comment>
<comment type="similarity">
    <text evidence="1">Belongs to the archaeal FAD synthase family.</text>
</comment>
<name>RIBL_HALVD</name>
<gene>
    <name evidence="1" type="primary">ribL</name>
    <name type="ordered locus">HVO_1015</name>
</gene>
<sequence>MRRVIAQGTFDILHPGHVHYLSDAASLGDELHVIIARGENVTHKPKPILDGRQRRDMVAALDVVDEAHLGHVEDIFVPIEEIDPDVIVLGYDQHHDEDGIKAALDARGIDCEVTRATPRELRHDDELLSTGRIIDRIVERRC</sequence>
<evidence type="ECO:0000255" key="1">
    <source>
        <dbReference type="HAMAP-Rule" id="MF_02115"/>
    </source>
</evidence>
<dbReference type="EC" id="2.7.7.2" evidence="1"/>
<dbReference type="EMBL" id="CP001956">
    <property type="protein sequence ID" value="ADE04925.1"/>
    <property type="molecule type" value="Genomic_DNA"/>
</dbReference>
<dbReference type="RefSeq" id="WP_004043927.1">
    <property type="nucleotide sequence ID" value="NC_013967.1"/>
</dbReference>
<dbReference type="SMR" id="D4GVJ2"/>
<dbReference type="STRING" id="309800.HVO_1015"/>
<dbReference type="PaxDb" id="309800-C498_13684"/>
<dbReference type="EnsemblBacteria" id="ADE04925">
    <property type="protein sequence ID" value="ADE04925"/>
    <property type="gene ID" value="HVO_1015"/>
</dbReference>
<dbReference type="GeneID" id="8926321"/>
<dbReference type="KEGG" id="hvo:HVO_1015"/>
<dbReference type="eggNOG" id="arCOG01222">
    <property type="taxonomic scope" value="Archaea"/>
</dbReference>
<dbReference type="HOGENOM" id="CLU_034585_2_1_2"/>
<dbReference type="OrthoDB" id="1912at2157"/>
<dbReference type="UniPathway" id="UPA00277">
    <property type="reaction ID" value="UER00407"/>
</dbReference>
<dbReference type="Proteomes" id="UP000008243">
    <property type="component" value="Chromosome"/>
</dbReference>
<dbReference type="GO" id="GO:0005524">
    <property type="term" value="F:ATP binding"/>
    <property type="evidence" value="ECO:0007669"/>
    <property type="project" value="UniProtKB-UniRule"/>
</dbReference>
<dbReference type="GO" id="GO:0003919">
    <property type="term" value="F:FMN adenylyltransferase activity"/>
    <property type="evidence" value="ECO:0007669"/>
    <property type="project" value="UniProtKB-UniRule"/>
</dbReference>
<dbReference type="GO" id="GO:0006747">
    <property type="term" value="P:FAD biosynthetic process"/>
    <property type="evidence" value="ECO:0007669"/>
    <property type="project" value="UniProtKB-UniRule"/>
</dbReference>
<dbReference type="GO" id="GO:0046444">
    <property type="term" value="P:FMN metabolic process"/>
    <property type="evidence" value="ECO:0007669"/>
    <property type="project" value="UniProtKB-UniRule"/>
</dbReference>
<dbReference type="Gene3D" id="3.40.50.620">
    <property type="entry name" value="HUPs"/>
    <property type="match status" value="1"/>
</dbReference>
<dbReference type="HAMAP" id="MF_02115">
    <property type="entry name" value="FAD_synth_arch"/>
    <property type="match status" value="1"/>
</dbReference>
<dbReference type="InterPro" id="IPR050385">
    <property type="entry name" value="Archaeal_FAD_synthase"/>
</dbReference>
<dbReference type="InterPro" id="IPR004821">
    <property type="entry name" value="Cyt_trans-like"/>
</dbReference>
<dbReference type="InterPro" id="IPR024902">
    <property type="entry name" value="FAD_synth_RibL"/>
</dbReference>
<dbReference type="InterPro" id="IPR014729">
    <property type="entry name" value="Rossmann-like_a/b/a_fold"/>
</dbReference>
<dbReference type="NCBIfam" id="TIGR00125">
    <property type="entry name" value="cyt_tran_rel"/>
    <property type="match status" value="1"/>
</dbReference>
<dbReference type="PANTHER" id="PTHR43793">
    <property type="entry name" value="FAD SYNTHASE"/>
    <property type="match status" value="1"/>
</dbReference>
<dbReference type="PANTHER" id="PTHR43793:SF1">
    <property type="entry name" value="FAD SYNTHASE"/>
    <property type="match status" value="1"/>
</dbReference>
<dbReference type="Pfam" id="PF01467">
    <property type="entry name" value="CTP_transf_like"/>
    <property type="match status" value="1"/>
</dbReference>
<dbReference type="SUPFAM" id="SSF52374">
    <property type="entry name" value="Nucleotidylyl transferase"/>
    <property type="match status" value="1"/>
</dbReference>
<proteinExistence type="inferred from homology"/>
<protein>
    <recommendedName>
        <fullName evidence="1">FAD synthase</fullName>
        <ecNumber evidence="1">2.7.7.2</ecNumber>
    </recommendedName>
    <alternativeName>
        <fullName evidence="1">FMN adenylyltransferase</fullName>
    </alternativeName>
    <alternativeName>
        <fullName evidence="1">Flavin adenine dinucleotide synthase</fullName>
    </alternativeName>
</protein>